<gene>
    <name evidence="1" type="primary">cemA</name>
</gene>
<sequence>MPKKKALTPLPYLASIVFLPWWISISFNKSLEPWVTNWWNTRQSETFLNDIQEKNVLERFIELEQLFLLDEMIKEYPGTQIQKLRIGIHKETIQLVKMHNEDHIHIILHFSTNIICFAILSGYSILGNEELVILNSWVQEFLYNLSDTIKAFSILLLTDLCIGFHSPHGWELMIGSVYKDFGFAHNDQIISGLVSTFPVILDTILKYWIFHYLNRVSPSLVVVYHSMNE</sequence>
<evidence type="ECO:0000255" key="1">
    <source>
        <dbReference type="HAMAP-Rule" id="MF_01308"/>
    </source>
</evidence>
<evidence type="ECO:0000305" key="2"/>
<geneLocation type="chloroplast"/>
<dbReference type="EMBL" id="DQ899947">
    <property type="protein sequence ID" value="ABI32521.1"/>
    <property type="molecule type" value="Genomic_DNA"/>
</dbReference>
<dbReference type="RefSeq" id="YP_740214.1">
    <property type="nucleotide sequence ID" value="NC_008326.1"/>
</dbReference>
<dbReference type="GeneID" id="4266636"/>
<dbReference type="GO" id="GO:0009706">
    <property type="term" value="C:chloroplast inner membrane"/>
    <property type="evidence" value="ECO:0007669"/>
    <property type="project" value="UniProtKB-SubCell"/>
</dbReference>
<dbReference type="GO" id="GO:0015297">
    <property type="term" value="F:antiporter activity"/>
    <property type="evidence" value="ECO:0007669"/>
    <property type="project" value="UniProtKB-KW"/>
</dbReference>
<dbReference type="GO" id="GO:0015078">
    <property type="term" value="F:proton transmembrane transporter activity"/>
    <property type="evidence" value="ECO:0007669"/>
    <property type="project" value="UniProtKB-UniRule"/>
</dbReference>
<dbReference type="GO" id="GO:0006813">
    <property type="term" value="P:potassium ion transport"/>
    <property type="evidence" value="ECO:0007669"/>
    <property type="project" value="UniProtKB-UniRule"/>
</dbReference>
<dbReference type="HAMAP" id="MF_01308">
    <property type="entry name" value="CemA_PxcA"/>
    <property type="match status" value="1"/>
</dbReference>
<dbReference type="InterPro" id="IPR004282">
    <property type="entry name" value="CemA"/>
</dbReference>
<dbReference type="PANTHER" id="PTHR33650:SF2">
    <property type="entry name" value="CHLOROPLAST ENVELOPE MEMBRANE PROTEIN"/>
    <property type="match status" value="1"/>
</dbReference>
<dbReference type="PANTHER" id="PTHR33650">
    <property type="entry name" value="CHLOROPLAST ENVELOPE MEMBRANE PROTEIN-RELATED"/>
    <property type="match status" value="1"/>
</dbReference>
<dbReference type="Pfam" id="PF03040">
    <property type="entry name" value="CemA"/>
    <property type="match status" value="1"/>
</dbReference>
<proteinExistence type="inferred from homology"/>
<feature type="chain" id="PRO_0000275243" description="Potassium/proton antiporter CemA">
    <location>
        <begin position="1"/>
        <end position="229"/>
    </location>
</feature>
<feature type="transmembrane region" description="Helical" evidence="1">
    <location>
        <begin position="7"/>
        <end position="27"/>
    </location>
</feature>
<feature type="transmembrane region" description="Helical" evidence="1">
    <location>
        <begin position="106"/>
        <end position="126"/>
    </location>
</feature>
<feature type="transmembrane region" description="Helical" evidence="1">
    <location>
        <begin position="189"/>
        <end position="209"/>
    </location>
</feature>
<name>CEMA_LIRTU</name>
<organism>
    <name type="scientific">Liriodendron tulipifera</name>
    <name type="common">Tuliptree</name>
    <name type="synonym">Tulip poplar</name>
    <dbReference type="NCBI Taxonomy" id="3415"/>
    <lineage>
        <taxon>Eukaryota</taxon>
        <taxon>Viridiplantae</taxon>
        <taxon>Streptophyta</taxon>
        <taxon>Embryophyta</taxon>
        <taxon>Tracheophyta</taxon>
        <taxon>Spermatophyta</taxon>
        <taxon>Magnoliopsida</taxon>
        <taxon>Magnoliidae</taxon>
        <taxon>Magnoliales</taxon>
        <taxon>Magnoliaceae</taxon>
        <taxon>Liriodendron</taxon>
    </lineage>
</organism>
<keyword id="KW-0050">Antiport</keyword>
<keyword id="KW-0150">Chloroplast</keyword>
<keyword id="KW-0375">Hydrogen ion transport</keyword>
<keyword id="KW-0406">Ion transport</keyword>
<keyword id="KW-0472">Membrane</keyword>
<keyword id="KW-0934">Plastid</keyword>
<keyword id="KW-1001">Plastid inner membrane</keyword>
<keyword id="KW-0630">Potassium</keyword>
<keyword id="KW-0633">Potassium transport</keyword>
<keyword id="KW-0812">Transmembrane</keyword>
<keyword id="KW-1133">Transmembrane helix</keyword>
<keyword id="KW-0813">Transport</keyword>
<accession>Q0G9K7</accession>
<protein>
    <recommendedName>
        <fullName evidence="1">Potassium/proton antiporter CemA</fullName>
    </recommendedName>
    <alternativeName>
        <fullName evidence="1">Chloroplast envelope membrane protein A</fullName>
        <shortName evidence="1">CemA</shortName>
    </alternativeName>
</protein>
<comment type="function">
    <text evidence="1">Contributes to K(+)/H(+) antiport activity by supporting proton efflux to control proton extrusion and homeostasis in chloroplasts in a light-dependent manner to modulate photosynthesis. Prevents excessive induction of non-photochemical quenching (NPQ) under continuous-light conditions. Indirectly promotes efficient inorganic carbon uptake into chloroplasts.</text>
</comment>
<comment type="catalytic activity">
    <reaction evidence="1">
        <text>K(+)(in) + H(+)(out) = K(+)(out) + H(+)(in)</text>
        <dbReference type="Rhea" id="RHEA:29467"/>
        <dbReference type="ChEBI" id="CHEBI:15378"/>
        <dbReference type="ChEBI" id="CHEBI:29103"/>
    </reaction>
</comment>
<comment type="subcellular location">
    <subcellularLocation>
        <location evidence="1">Plastid</location>
        <location evidence="1">Chloroplast inner membrane</location>
        <topology evidence="1">Multi-pass membrane protein</topology>
    </subcellularLocation>
</comment>
<comment type="similarity">
    <text evidence="1 2">Belongs to the CemA family.</text>
</comment>
<reference key="1">
    <citation type="journal article" date="2006" name="BMC Evol. Biol.">
        <title>Complete plastid genome sequences of Drimys, Liriodendron, and Piper: implications for the phylogenetic relationships of magnoliids.</title>
        <authorList>
            <person name="Cai Z."/>
            <person name="Penaflor C."/>
            <person name="Kuehl J.V."/>
            <person name="Leebens-Mack J."/>
            <person name="Carlson J.E."/>
            <person name="dePamphilis C.W."/>
            <person name="Boore J.L."/>
            <person name="Jansen R.K."/>
        </authorList>
    </citation>
    <scope>NUCLEOTIDE SEQUENCE [LARGE SCALE GENOMIC DNA]</scope>
</reference>